<protein>
    <recommendedName>
        <fullName>Transmembrane protein 81</fullName>
    </recommendedName>
</protein>
<sequence length="255" mass="28468">MKVLATSFVLGSLGLAFYLPLVVTTPKTLAIPEKLQEAVGKVIINATTCTVTCGLGYKEETVCEVGPDGVRRKCQTRRLECLTNWICGMLHFTILIGKEFELSCLSSDILEFGQEAFRFTWRLARGVISTDDEVFKPFQANSHFVKFKYAQEYDSGTYRCDVQLVKNLRLVKRLYFGLRVLPPNLVNLNFHQSLTEDQKLIDEGLEVNLDSYSKPHHPKWKKKVASALGIGIAIGVVGGVLVRIVLCALRGGLQQ</sequence>
<name>TMM81_HUMAN</name>
<dbReference type="EMBL" id="AY359081">
    <property type="protein sequence ID" value="AAQ89440.1"/>
    <property type="molecule type" value="mRNA"/>
</dbReference>
<dbReference type="EMBL" id="AL583832">
    <property type="status" value="NOT_ANNOTATED_CDS"/>
    <property type="molecule type" value="Genomic_DNA"/>
</dbReference>
<dbReference type="EMBL" id="BC061592">
    <property type="protein sequence ID" value="AAH61592.1"/>
    <property type="molecule type" value="mRNA"/>
</dbReference>
<dbReference type="CCDS" id="CCDS1450.1"/>
<dbReference type="RefSeq" id="NP_976310.1">
    <property type="nucleotide sequence ID" value="NM_203376.2"/>
</dbReference>
<dbReference type="BioGRID" id="132828">
    <property type="interactions" value="3"/>
</dbReference>
<dbReference type="STRING" id="9606.ENSP00000356135"/>
<dbReference type="GlyCosmos" id="Q6P7N7">
    <property type="glycosylation" value="2 sites, 1 glycan"/>
</dbReference>
<dbReference type="GlyGen" id="Q6P7N7">
    <property type="glycosylation" value="2 sites, 1 O-linked glycan (1 site)"/>
</dbReference>
<dbReference type="iPTMnet" id="Q6P7N7"/>
<dbReference type="PhosphoSitePlus" id="Q6P7N7"/>
<dbReference type="BioMuta" id="TMEM81"/>
<dbReference type="DMDM" id="74758298"/>
<dbReference type="jPOST" id="Q6P7N7"/>
<dbReference type="PaxDb" id="9606-ENSP00000356135"/>
<dbReference type="PeptideAtlas" id="Q6P7N7"/>
<dbReference type="Antibodypedia" id="59281">
    <property type="antibodies" value="11 antibodies from 7 providers"/>
</dbReference>
<dbReference type="DNASU" id="388730"/>
<dbReference type="Ensembl" id="ENST00000367167.4">
    <property type="protein sequence ID" value="ENSP00000356135.3"/>
    <property type="gene ID" value="ENSG00000174529.7"/>
</dbReference>
<dbReference type="GeneID" id="388730"/>
<dbReference type="KEGG" id="hsa:388730"/>
<dbReference type="MANE-Select" id="ENST00000367167.4">
    <property type="protein sequence ID" value="ENSP00000356135.3"/>
    <property type="RefSeq nucleotide sequence ID" value="NM_203376.2"/>
    <property type="RefSeq protein sequence ID" value="NP_976310.1"/>
</dbReference>
<dbReference type="UCSC" id="uc001hbt.3">
    <property type="organism name" value="human"/>
</dbReference>
<dbReference type="AGR" id="HGNC:32349"/>
<dbReference type="CTD" id="388730"/>
<dbReference type="GeneCards" id="TMEM81"/>
<dbReference type="HGNC" id="HGNC:32349">
    <property type="gene designation" value="TMEM81"/>
</dbReference>
<dbReference type="HPA" id="ENSG00000174529">
    <property type="expression patterns" value="Tissue enhanced (brain)"/>
</dbReference>
<dbReference type="neXtProt" id="NX_Q6P7N7"/>
<dbReference type="OpenTargets" id="ENSG00000174529"/>
<dbReference type="PharmGKB" id="PA143485633"/>
<dbReference type="VEuPathDB" id="HostDB:ENSG00000174529"/>
<dbReference type="eggNOG" id="ENOG502RYDZ">
    <property type="taxonomic scope" value="Eukaryota"/>
</dbReference>
<dbReference type="GeneTree" id="ENSGT00390000006349"/>
<dbReference type="HOGENOM" id="CLU_093881_0_0_1"/>
<dbReference type="InParanoid" id="Q6P7N7"/>
<dbReference type="OMA" id="ECLTNWL"/>
<dbReference type="OrthoDB" id="9390762at2759"/>
<dbReference type="PAN-GO" id="Q6P7N7">
    <property type="GO annotations" value="0 GO annotations based on evolutionary models"/>
</dbReference>
<dbReference type="PhylomeDB" id="Q6P7N7"/>
<dbReference type="TreeFam" id="TF333177"/>
<dbReference type="PathwayCommons" id="Q6P7N7"/>
<dbReference type="BioGRID-ORCS" id="388730">
    <property type="hits" value="10 hits in 1157 CRISPR screens"/>
</dbReference>
<dbReference type="GenomeRNAi" id="388730"/>
<dbReference type="Pharos" id="Q6P7N7">
    <property type="development level" value="Tdark"/>
</dbReference>
<dbReference type="PRO" id="PR:Q6P7N7"/>
<dbReference type="Proteomes" id="UP000005640">
    <property type="component" value="Chromosome 1"/>
</dbReference>
<dbReference type="RNAct" id="Q6P7N7">
    <property type="molecule type" value="protein"/>
</dbReference>
<dbReference type="Bgee" id="ENSG00000174529">
    <property type="expression patterns" value="Expressed in thymus and 99 other cell types or tissues"/>
</dbReference>
<dbReference type="GO" id="GO:0005886">
    <property type="term" value="C:plasma membrane"/>
    <property type="evidence" value="ECO:0000314"/>
    <property type="project" value="UniProt"/>
</dbReference>
<dbReference type="GO" id="GO:0030674">
    <property type="term" value="F:protein-macromolecule adaptor activity"/>
    <property type="evidence" value="ECO:0000314"/>
    <property type="project" value="UniProt"/>
</dbReference>
<dbReference type="GO" id="GO:0035036">
    <property type="term" value="P:sperm-egg recognition"/>
    <property type="evidence" value="ECO:0000314"/>
    <property type="project" value="UniProtKB"/>
</dbReference>
<dbReference type="CDD" id="cd00096">
    <property type="entry name" value="Ig"/>
    <property type="match status" value="1"/>
</dbReference>
<dbReference type="InterPro" id="IPR007110">
    <property type="entry name" value="Ig-like_dom"/>
</dbReference>
<dbReference type="InterPro" id="IPR036179">
    <property type="entry name" value="Ig-like_dom_sf"/>
</dbReference>
<dbReference type="InterPro" id="IPR039293">
    <property type="entry name" value="TMEM81"/>
</dbReference>
<dbReference type="PANTHER" id="PTHR35670">
    <property type="entry name" value="TRANSMEMBRANE PROTEIN 81"/>
    <property type="match status" value="1"/>
</dbReference>
<dbReference type="PANTHER" id="PTHR35670:SF1">
    <property type="entry name" value="TRANSMEMBRANE PROTEIN 81"/>
    <property type="match status" value="1"/>
</dbReference>
<dbReference type="SUPFAM" id="SSF48726">
    <property type="entry name" value="Immunoglobulin"/>
    <property type="match status" value="1"/>
</dbReference>
<dbReference type="PROSITE" id="PS50835">
    <property type="entry name" value="IG_LIKE"/>
    <property type="match status" value="1"/>
</dbReference>
<evidence type="ECO:0000250" key="1">
    <source>
        <dbReference type="UniProtKB" id="B8JI67"/>
    </source>
</evidence>
<evidence type="ECO:0000255" key="2"/>
<evidence type="ECO:0000255" key="3">
    <source>
        <dbReference type="PROSITE-ProRule" id="PRU00114"/>
    </source>
</evidence>
<evidence type="ECO:0000269" key="4">
    <source>
    </source>
</evidence>
<evidence type="ECO:0000269" key="5">
    <source>
    </source>
</evidence>
<evidence type="ECO:0000312" key="6">
    <source>
        <dbReference type="HGNC" id="HGNC:32349"/>
    </source>
</evidence>
<keyword id="KW-1003">Cell membrane</keyword>
<keyword id="KW-1015">Disulfide bond</keyword>
<keyword id="KW-0325">Glycoprotein</keyword>
<keyword id="KW-0393">Immunoglobulin domain</keyword>
<keyword id="KW-0472">Membrane</keyword>
<keyword id="KW-1185">Reference proteome</keyword>
<keyword id="KW-0732">Signal</keyword>
<keyword id="KW-0812">Transmembrane</keyword>
<keyword id="KW-1133">Transmembrane helix</keyword>
<reference key="1">
    <citation type="journal article" date="2003" name="Genome Res.">
        <title>The secreted protein discovery initiative (SPDI), a large-scale effort to identify novel human secreted and transmembrane proteins: a bioinformatics assessment.</title>
        <authorList>
            <person name="Clark H.F."/>
            <person name="Gurney A.L."/>
            <person name="Abaya E."/>
            <person name="Baker K."/>
            <person name="Baldwin D.T."/>
            <person name="Brush J."/>
            <person name="Chen J."/>
            <person name="Chow B."/>
            <person name="Chui C."/>
            <person name="Crowley C."/>
            <person name="Currell B."/>
            <person name="Deuel B."/>
            <person name="Dowd P."/>
            <person name="Eaton D."/>
            <person name="Foster J.S."/>
            <person name="Grimaldi C."/>
            <person name="Gu Q."/>
            <person name="Hass P.E."/>
            <person name="Heldens S."/>
            <person name="Huang A."/>
            <person name="Kim H.S."/>
            <person name="Klimowski L."/>
            <person name="Jin Y."/>
            <person name="Johnson S."/>
            <person name="Lee J."/>
            <person name="Lewis L."/>
            <person name="Liao D."/>
            <person name="Mark M.R."/>
            <person name="Robbie E."/>
            <person name="Sanchez C."/>
            <person name="Schoenfeld J."/>
            <person name="Seshagiri S."/>
            <person name="Simmons L."/>
            <person name="Singh J."/>
            <person name="Smith V."/>
            <person name="Stinson J."/>
            <person name="Vagts A."/>
            <person name="Vandlen R.L."/>
            <person name="Watanabe C."/>
            <person name="Wieand D."/>
            <person name="Woods K."/>
            <person name="Xie M.-H."/>
            <person name="Yansura D.G."/>
            <person name="Yi S."/>
            <person name="Yu G."/>
            <person name="Yuan J."/>
            <person name="Zhang M."/>
            <person name="Zhang Z."/>
            <person name="Goddard A.D."/>
            <person name="Wood W.I."/>
            <person name="Godowski P.J."/>
            <person name="Gray A.M."/>
        </authorList>
    </citation>
    <scope>NUCLEOTIDE SEQUENCE [LARGE SCALE MRNA]</scope>
    <scope>VARIANT GLN-77</scope>
</reference>
<reference key="2">
    <citation type="journal article" date="2006" name="Nature">
        <title>The DNA sequence and biological annotation of human chromosome 1.</title>
        <authorList>
            <person name="Gregory S.G."/>
            <person name="Barlow K.F."/>
            <person name="McLay K.E."/>
            <person name="Kaul R."/>
            <person name="Swarbreck D."/>
            <person name="Dunham A."/>
            <person name="Scott C.E."/>
            <person name="Howe K.L."/>
            <person name="Woodfine K."/>
            <person name="Spencer C.C.A."/>
            <person name="Jones M.C."/>
            <person name="Gillson C."/>
            <person name="Searle S."/>
            <person name="Zhou Y."/>
            <person name="Kokocinski F."/>
            <person name="McDonald L."/>
            <person name="Evans R."/>
            <person name="Phillips K."/>
            <person name="Atkinson A."/>
            <person name="Cooper R."/>
            <person name="Jones C."/>
            <person name="Hall R.E."/>
            <person name="Andrews T.D."/>
            <person name="Lloyd C."/>
            <person name="Ainscough R."/>
            <person name="Almeida J.P."/>
            <person name="Ambrose K.D."/>
            <person name="Anderson F."/>
            <person name="Andrew R.W."/>
            <person name="Ashwell R.I.S."/>
            <person name="Aubin K."/>
            <person name="Babbage A.K."/>
            <person name="Bagguley C.L."/>
            <person name="Bailey J."/>
            <person name="Beasley H."/>
            <person name="Bethel G."/>
            <person name="Bird C.P."/>
            <person name="Bray-Allen S."/>
            <person name="Brown J.Y."/>
            <person name="Brown A.J."/>
            <person name="Buckley D."/>
            <person name="Burton J."/>
            <person name="Bye J."/>
            <person name="Carder C."/>
            <person name="Chapman J.C."/>
            <person name="Clark S.Y."/>
            <person name="Clarke G."/>
            <person name="Clee C."/>
            <person name="Cobley V."/>
            <person name="Collier R.E."/>
            <person name="Corby N."/>
            <person name="Coville G.J."/>
            <person name="Davies J."/>
            <person name="Deadman R."/>
            <person name="Dunn M."/>
            <person name="Earthrowl M."/>
            <person name="Ellington A.G."/>
            <person name="Errington H."/>
            <person name="Frankish A."/>
            <person name="Frankland J."/>
            <person name="French L."/>
            <person name="Garner P."/>
            <person name="Garnett J."/>
            <person name="Gay L."/>
            <person name="Ghori M.R.J."/>
            <person name="Gibson R."/>
            <person name="Gilby L.M."/>
            <person name="Gillett W."/>
            <person name="Glithero R.J."/>
            <person name="Grafham D.V."/>
            <person name="Griffiths C."/>
            <person name="Griffiths-Jones S."/>
            <person name="Grocock R."/>
            <person name="Hammond S."/>
            <person name="Harrison E.S.I."/>
            <person name="Hart E."/>
            <person name="Haugen E."/>
            <person name="Heath P.D."/>
            <person name="Holmes S."/>
            <person name="Holt K."/>
            <person name="Howden P.J."/>
            <person name="Hunt A.R."/>
            <person name="Hunt S.E."/>
            <person name="Hunter G."/>
            <person name="Isherwood J."/>
            <person name="James R."/>
            <person name="Johnson C."/>
            <person name="Johnson D."/>
            <person name="Joy A."/>
            <person name="Kay M."/>
            <person name="Kershaw J.K."/>
            <person name="Kibukawa M."/>
            <person name="Kimberley A.M."/>
            <person name="King A."/>
            <person name="Knights A.J."/>
            <person name="Lad H."/>
            <person name="Laird G."/>
            <person name="Lawlor S."/>
            <person name="Leongamornlert D.A."/>
            <person name="Lloyd D.M."/>
            <person name="Loveland J."/>
            <person name="Lovell J."/>
            <person name="Lush M.J."/>
            <person name="Lyne R."/>
            <person name="Martin S."/>
            <person name="Mashreghi-Mohammadi M."/>
            <person name="Matthews L."/>
            <person name="Matthews N.S.W."/>
            <person name="McLaren S."/>
            <person name="Milne S."/>
            <person name="Mistry S."/>
            <person name="Moore M.J.F."/>
            <person name="Nickerson T."/>
            <person name="O'Dell C.N."/>
            <person name="Oliver K."/>
            <person name="Palmeiri A."/>
            <person name="Palmer S.A."/>
            <person name="Parker A."/>
            <person name="Patel D."/>
            <person name="Pearce A.V."/>
            <person name="Peck A.I."/>
            <person name="Pelan S."/>
            <person name="Phelps K."/>
            <person name="Phillimore B.J."/>
            <person name="Plumb R."/>
            <person name="Rajan J."/>
            <person name="Raymond C."/>
            <person name="Rouse G."/>
            <person name="Saenphimmachak C."/>
            <person name="Sehra H.K."/>
            <person name="Sheridan E."/>
            <person name="Shownkeen R."/>
            <person name="Sims S."/>
            <person name="Skuce C.D."/>
            <person name="Smith M."/>
            <person name="Steward C."/>
            <person name="Subramanian S."/>
            <person name="Sycamore N."/>
            <person name="Tracey A."/>
            <person name="Tromans A."/>
            <person name="Van Helmond Z."/>
            <person name="Wall M."/>
            <person name="Wallis J.M."/>
            <person name="White S."/>
            <person name="Whitehead S.L."/>
            <person name="Wilkinson J.E."/>
            <person name="Willey D.L."/>
            <person name="Williams H."/>
            <person name="Wilming L."/>
            <person name="Wray P.W."/>
            <person name="Wu Z."/>
            <person name="Coulson A."/>
            <person name="Vaudin M."/>
            <person name="Sulston J.E."/>
            <person name="Durbin R.M."/>
            <person name="Hubbard T."/>
            <person name="Wooster R."/>
            <person name="Dunham I."/>
            <person name="Carter N.P."/>
            <person name="McVean G."/>
            <person name="Ross M.T."/>
            <person name="Harrow J."/>
            <person name="Olson M.V."/>
            <person name="Beck S."/>
            <person name="Rogers J."/>
            <person name="Bentley D.R."/>
        </authorList>
    </citation>
    <scope>NUCLEOTIDE SEQUENCE [LARGE SCALE GENOMIC DNA]</scope>
</reference>
<reference key="3">
    <citation type="journal article" date="2004" name="Genome Res.">
        <title>The status, quality, and expansion of the NIH full-length cDNA project: the Mammalian Gene Collection (MGC).</title>
        <authorList>
            <consortium name="The MGC Project Team"/>
        </authorList>
    </citation>
    <scope>NUCLEOTIDE SEQUENCE [LARGE SCALE MRNA]</scope>
    <source>
        <tissue>PNS</tissue>
    </source>
</reference>
<reference key="4">
    <citation type="journal article" date="2024" name="Cell">
        <title>A conserved fertilization complex bridges sperm and egg in vertebrates.</title>
        <authorList>
            <person name="Deneke V.E."/>
            <person name="Blaha A."/>
            <person name="Lu Y."/>
            <person name="Suwita J.P."/>
            <person name="Draper J.M."/>
            <person name="Phan C.S."/>
            <person name="Panser K."/>
            <person name="Schleiffer A."/>
            <person name="Jacob L."/>
            <person name="Humer T."/>
            <person name="Stejskal K."/>
            <person name="Krssakova G."/>
            <person name="Roitinger E."/>
            <person name="Handler D."/>
            <person name="Kamoshita M."/>
            <person name="Vance T.D.R."/>
            <person name="Wang X."/>
            <person name="Surm J.M."/>
            <person name="Moran Y."/>
            <person name="Lee J.E."/>
            <person name="Ikawa M."/>
            <person name="Pauli A."/>
        </authorList>
    </citation>
    <scope>FUNCTION</scope>
    <scope>TISSUE SPECIFICITY</scope>
    <scope>INTERACTION WITH IZUMO1 AND SPACA6</scope>
</reference>
<proteinExistence type="evidence at protein level"/>
<feature type="signal peptide" evidence="2">
    <location>
        <begin position="1"/>
        <end position="30"/>
    </location>
</feature>
<feature type="chain" id="PRO_0000287876" description="Transmembrane protein 81">
    <location>
        <begin position="31"/>
        <end position="255"/>
    </location>
</feature>
<feature type="topological domain" description="Extracellular" evidence="2">
    <location>
        <begin position="31"/>
        <end position="226"/>
    </location>
</feature>
<feature type="transmembrane region" description="Helical" evidence="2">
    <location>
        <begin position="227"/>
        <end position="247"/>
    </location>
</feature>
<feature type="topological domain" description="Cytoplasmic" evidence="2">
    <location>
        <begin position="248"/>
        <end position="255"/>
    </location>
</feature>
<feature type="domain" description="Ig-like">
    <location>
        <begin position="83"/>
        <end position="171"/>
    </location>
</feature>
<feature type="glycosylation site" description="N-linked (GlcNAc...) asparagine" evidence="2">
    <location>
        <position position="45"/>
    </location>
</feature>
<feature type="disulfide bond" evidence="3">
    <location>
        <begin position="104"/>
        <end position="160"/>
    </location>
</feature>
<feature type="sequence variant" id="VAR_032353" description="In dbSNP:rs4951168." evidence="4">
    <original>R</original>
    <variation>Q</variation>
    <location>
        <position position="77"/>
    </location>
</feature>
<feature type="sequence variant" id="VAR_032354" description="In dbSNP:rs16855059.">
    <original>F</original>
    <variation>S</variation>
    <location>
        <position position="100"/>
    </location>
</feature>
<accession>Q6P7N7</accession>
<accession>Q6UVZ4</accession>
<gene>
    <name evidence="6" type="primary">TMEM81</name>
    <name type="ORF">UNQ2788/PRO7178</name>
</gene>
<comment type="function">
    <text evidence="5">Essential fertilization factor required for male fertility. Part of a conserved trimeric sperm complex with the essential fertilization factors IZUMO1 and SPACA6 which bridges sperm and oocyte membranes during fertilization by binding to IZUMO1R/JUNO on the oocyte.</text>
</comment>
<comment type="subunit">
    <text evidence="5">Forms a complex with IZUMO1 and SPACA6 on spermatocyte cell membrane required for fertilization.</text>
</comment>
<comment type="subcellular location">
    <subcellularLocation>
        <location evidence="1">Cell membrane</location>
        <topology evidence="2">Single-pass type I membrane protein</topology>
    </subcellularLocation>
</comment>
<comment type="tissue specificity">
    <text evidence="5">Highly expressed in sperm (at protein level).</text>
</comment>
<organism>
    <name type="scientific">Homo sapiens</name>
    <name type="common">Human</name>
    <dbReference type="NCBI Taxonomy" id="9606"/>
    <lineage>
        <taxon>Eukaryota</taxon>
        <taxon>Metazoa</taxon>
        <taxon>Chordata</taxon>
        <taxon>Craniata</taxon>
        <taxon>Vertebrata</taxon>
        <taxon>Euteleostomi</taxon>
        <taxon>Mammalia</taxon>
        <taxon>Eutheria</taxon>
        <taxon>Euarchontoglires</taxon>
        <taxon>Primates</taxon>
        <taxon>Haplorrhini</taxon>
        <taxon>Catarrhini</taxon>
        <taxon>Hominidae</taxon>
        <taxon>Homo</taxon>
    </lineage>
</organism>